<protein>
    <recommendedName>
        <fullName evidence="1">Small ribosomal subunit protein uS9</fullName>
    </recommendedName>
    <alternativeName>
        <fullName evidence="3">30S ribosomal protein S9</fullName>
    </alternativeName>
</protein>
<evidence type="ECO:0000255" key="1">
    <source>
        <dbReference type="HAMAP-Rule" id="MF_00532"/>
    </source>
</evidence>
<evidence type="ECO:0000256" key="2">
    <source>
        <dbReference type="SAM" id="MobiDB-lite"/>
    </source>
</evidence>
<evidence type="ECO:0000305" key="3"/>
<evidence type="ECO:0007829" key="4">
    <source>
        <dbReference type="PDB" id="8BYV"/>
    </source>
</evidence>
<feature type="chain" id="PRO_1000051336" description="Small ribosomal subunit protein uS9">
    <location>
        <begin position="1"/>
        <end position="132"/>
    </location>
</feature>
<feature type="region of interest" description="Disordered" evidence="2">
    <location>
        <begin position="101"/>
        <end position="132"/>
    </location>
</feature>
<feature type="compositionally biased region" description="Basic residues" evidence="2">
    <location>
        <begin position="113"/>
        <end position="132"/>
    </location>
</feature>
<feature type="strand" evidence="4">
    <location>
        <begin position="8"/>
        <end position="14"/>
    </location>
</feature>
<feature type="strand" evidence="4">
    <location>
        <begin position="17"/>
        <end position="23"/>
    </location>
</feature>
<feature type="strand" evidence="4">
    <location>
        <begin position="26"/>
        <end position="28"/>
    </location>
</feature>
<feature type="helix" evidence="4">
    <location>
        <begin position="37"/>
        <end position="40"/>
    </location>
</feature>
<feature type="helix" evidence="4">
    <location>
        <begin position="47"/>
        <end position="56"/>
    </location>
</feature>
<feature type="strand" evidence="4">
    <location>
        <begin position="65"/>
        <end position="72"/>
    </location>
</feature>
<feature type="helix" evidence="4">
    <location>
        <begin position="74"/>
        <end position="92"/>
    </location>
</feature>
<feature type="helix" evidence="4">
    <location>
        <begin position="94"/>
        <end position="96"/>
    </location>
</feature>
<feature type="helix" evidence="4">
    <location>
        <begin position="97"/>
        <end position="103"/>
    </location>
</feature>
<reference key="1">
    <citation type="book" date="2006" name="Gram positive pathogens, 2nd edition">
        <title>The Staphylococcus aureus NCTC 8325 genome.</title>
        <editorList>
            <person name="Fischetti V."/>
            <person name="Novick R."/>
            <person name="Ferretti J."/>
            <person name="Portnoy D."/>
            <person name="Rood J."/>
        </editorList>
        <authorList>
            <person name="Gillaspy A.F."/>
            <person name="Worrell V."/>
            <person name="Orvis J."/>
            <person name="Roe B.A."/>
            <person name="Dyer D.W."/>
            <person name="Iandolo J.J."/>
        </authorList>
    </citation>
    <scope>NUCLEOTIDE SEQUENCE [LARGE SCALE GENOMIC DNA]</scope>
    <source>
        <strain>NCTC 8325 / PS 47</strain>
    </source>
</reference>
<name>RS9_STAA8</name>
<proteinExistence type="evidence at protein level"/>
<dbReference type="EMBL" id="CP000253">
    <property type="protein sequence ID" value="ABD31497.1"/>
    <property type="molecule type" value="Genomic_DNA"/>
</dbReference>
<dbReference type="RefSeq" id="WP_000170975.1">
    <property type="nucleotide sequence ID" value="NC_007795.1"/>
</dbReference>
<dbReference type="RefSeq" id="YP_500946.1">
    <property type="nucleotide sequence ID" value="NC_007795.1"/>
</dbReference>
<dbReference type="PDB" id="5LI0">
    <property type="method" value="EM"/>
    <property type="resolution" value="3.80 A"/>
    <property type="chains" value="i=5-132"/>
</dbReference>
<dbReference type="PDB" id="5ND8">
    <property type="method" value="EM"/>
    <property type="resolution" value="3.70 A"/>
    <property type="chains" value="i=1-132"/>
</dbReference>
<dbReference type="PDB" id="5ND9">
    <property type="method" value="EM"/>
    <property type="resolution" value="3.70 A"/>
    <property type="chains" value="i=1-132"/>
</dbReference>
<dbReference type="PDB" id="5TCU">
    <property type="method" value="EM"/>
    <property type="resolution" value="3.90 A"/>
    <property type="chains" value="SH=6-132"/>
</dbReference>
<dbReference type="PDB" id="6YEF">
    <property type="method" value="EM"/>
    <property type="resolution" value="3.20 A"/>
    <property type="chains" value="i=1-132"/>
</dbReference>
<dbReference type="PDB" id="7BGE">
    <property type="method" value="EM"/>
    <property type="resolution" value="3.60 A"/>
    <property type="chains" value="i=1-132"/>
</dbReference>
<dbReference type="PDB" id="7KWG">
    <property type="method" value="EM"/>
    <property type="resolution" value="3.75 A"/>
    <property type="chains" value="i=1-132"/>
</dbReference>
<dbReference type="PDB" id="7NHL">
    <property type="method" value="EM"/>
    <property type="resolution" value="3.10 A"/>
    <property type="chains" value="j=1-132"/>
</dbReference>
<dbReference type="PDB" id="7NHM">
    <property type="method" value="EM"/>
    <property type="resolution" value="3.10 A"/>
    <property type="chains" value="j=1-132"/>
</dbReference>
<dbReference type="PDB" id="8BH6">
    <property type="method" value="EM"/>
    <property type="resolution" value="3.70 A"/>
    <property type="chains" value="i=1-132"/>
</dbReference>
<dbReference type="PDB" id="8BH7">
    <property type="method" value="EM"/>
    <property type="resolution" value="4.23 A"/>
    <property type="chains" value="i=1-132"/>
</dbReference>
<dbReference type="PDB" id="8BYV">
    <property type="method" value="EM"/>
    <property type="resolution" value="2.89 A"/>
    <property type="chains" value="i=1-132"/>
</dbReference>
<dbReference type="PDB" id="8P2F">
    <property type="method" value="EM"/>
    <property type="resolution" value="2.44 A"/>
    <property type="chains" value="j=1-132"/>
</dbReference>
<dbReference type="PDB" id="8P2G">
    <property type="method" value="EM"/>
    <property type="resolution" value="2.02 A"/>
    <property type="chains" value="j=1-132"/>
</dbReference>
<dbReference type="PDB" id="8P2H">
    <property type="method" value="EM"/>
    <property type="resolution" value="2.49 A"/>
    <property type="chains" value="j=1-132"/>
</dbReference>
<dbReference type="PDBsum" id="5LI0"/>
<dbReference type="PDBsum" id="5ND8"/>
<dbReference type="PDBsum" id="5ND9"/>
<dbReference type="PDBsum" id="5TCU"/>
<dbReference type="PDBsum" id="6YEF"/>
<dbReference type="PDBsum" id="7BGE"/>
<dbReference type="PDBsum" id="7KWG"/>
<dbReference type="PDBsum" id="7NHL"/>
<dbReference type="PDBsum" id="7NHM"/>
<dbReference type="PDBsum" id="8BH6"/>
<dbReference type="PDBsum" id="8BH7"/>
<dbReference type="PDBsum" id="8BYV"/>
<dbReference type="PDBsum" id="8P2F"/>
<dbReference type="PDBsum" id="8P2G"/>
<dbReference type="PDBsum" id="8P2H"/>
<dbReference type="EMDB" id="EMD-10791"/>
<dbReference type="EMDB" id="EMD-12179"/>
<dbReference type="EMDB" id="EMD-12332"/>
<dbReference type="EMDB" id="EMD-12333"/>
<dbReference type="EMDB" id="EMD-16048"/>
<dbReference type="EMDB" id="EMD-16049"/>
<dbReference type="EMDB" id="EMD-16334"/>
<dbReference type="EMDB" id="EMD-17363"/>
<dbReference type="EMDB" id="EMD-17364"/>
<dbReference type="EMDB" id="EMD-17365"/>
<dbReference type="EMDB" id="EMD-23052"/>
<dbReference type="EMDB" id="EMD-3624"/>
<dbReference type="EMDB" id="EMD-3625"/>
<dbReference type="EMDB" id="EMD-4050"/>
<dbReference type="EMDB" id="EMD-8402"/>
<dbReference type="SMR" id="Q2FW39"/>
<dbReference type="IntAct" id="Q2FW39">
    <property type="interactions" value="1"/>
</dbReference>
<dbReference type="STRING" id="93061.SAOUHSC_02477"/>
<dbReference type="PaxDb" id="1280-SAXN108_2467"/>
<dbReference type="GeneID" id="3920855"/>
<dbReference type="KEGG" id="sao:SAOUHSC_02477"/>
<dbReference type="PATRIC" id="fig|93061.5.peg.2234"/>
<dbReference type="eggNOG" id="COG0103">
    <property type="taxonomic scope" value="Bacteria"/>
</dbReference>
<dbReference type="HOGENOM" id="CLU_046483_2_1_9"/>
<dbReference type="OrthoDB" id="9803965at2"/>
<dbReference type="PRO" id="PR:Q2FW39"/>
<dbReference type="Proteomes" id="UP000008816">
    <property type="component" value="Chromosome"/>
</dbReference>
<dbReference type="GO" id="GO:0022627">
    <property type="term" value="C:cytosolic small ribosomal subunit"/>
    <property type="evidence" value="ECO:0000318"/>
    <property type="project" value="GO_Central"/>
</dbReference>
<dbReference type="GO" id="GO:0003723">
    <property type="term" value="F:RNA binding"/>
    <property type="evidence" value="ECO:0000318"/>
    <property type="project" value="GO_Central"/>
</dbReference>
<dbReference type="GO" id="GO:0003735">
    <property type="term" value="F:structural constituent of ribosome"/>
    <property type="evidence" value="ECO:0000318"/>
    <property type="project" value="GO_Central"/>
</dbReference>
<dbReference type="GO" id="GO:0006412">
    <property type="term" value="P:translation"/>
    <property type="evidence" value="ECO:0007669"/>
    <property type="project" value="UniProtKB-UniRule"/>
</dbReference>
<dbReference type="FunFam" id="3.30.230.10:FF:000001">
    <property type="entry name" value="30S ribosomal protein S9"/>
    <property type="match status" value="1"/>
</dbReference>
<dbReference type="Gene3D" id="3.30.230.10">
    <property type="match status" value="1"/>
</dbReference>
<dbReference type="HAMAP" id="MF_00532_B">
    <property type="entry name" value="Ribosomal_uS9_B"/>
    <property type="match status" value="1"/>
</dbReference>
<dbReference type="InterPro" id="IPR020568">
    <property type="entry name" value="Ribosomal_Su5_D2-typ_SF"/>
</dbReference>
<dbReference type="InterPro" id="IPR000754">
    <property type="entry name" value="Ribosomal_uS9"/>
</dbReference>
<dbReference type="InterPro" id="IPR023035">
    <property type="entry name" value="Ribosomal_uS9_bac/plastid"/>
</dbReference>
<dbReference type="InterPro" id="IPR020574">
    <property type="entry name" value="Ribosomal_uS9_CS"/>
</dbReference>
<dbReference type="InterPro" id="IPR014721">
    <property type="entry name" value="Ribsml_uS5_D2-typ_fold_subgr"/>
</dbReference>
<dbReference type="NCBIfam" id="NF001099">
    <property type="entry name" value="PRK00132.1"/>
    <property type="match status" value="1"/>
</dbReference>
<dbReference type="PANTHER" id="PTHR21569">
    <property type="entry name" value="RIBOSOMAL PROTEIN S9"/>
    <property type="match status" value="1"/>
</dbReference>
<dbReference type="PANTHER" id="PTHR21569:SF1">
    <property type="entry name" value="SMALL RIBOSOMAL SUBUNIT PROTEIN US9M"/>
    <property type="match status" value="1"/>
</dbReference>
<dbReference type="Pfam" id="PF00380">
    <property type="entry name" value="Ribosomal_S9"/>
    <property type="match status" value="1"/>
</dbReference>
<dbReference type="SUPFAM" id="SSF54211">
    <property type="entry name" value="Ribosomal protein S5 domain 2-like"/>
    <property type="match status" value="1"/>
</dbReference>
<dbReference type="PROSITE" id="PS00360">
    <property type="entry name" value="RIBOSOMAL_S9"/>
    <property type="match status" value="1"/>
</dbReference>
<comment type="similarity">
    <text evidence="1">Belongs to the universal ribosomal protein uS9 family.</text>
</comment>
<gene>
    <name evidence="1" type="primary">rpsI</name>
    <name type="ordered locus">SAOUHSC_02477</name>
</gene>
<organism>
    <name type="scientific">Staphylococcus aureus (strain NCTC 8325 / PS 47)</name>
    <dbReference type="NCBI Taxonomy" id="93061"/>
    <lineage>
        <taxon>Bacteria</taxon>
        <taxon>Bacillati</taxon>
        <taxon>Bacillota</taxon>
        <taxon>Bacilli</taxon>
        <taxon>Bacillales</taxon>
        <taxon>Staphylococcaceae</taxon>
        <taxon>Staphylococcus</taxon>
    </lineage>
</organism>
<accession>Q2FW39</accession>
<sequence length="132" mass="14830">MTLAQVEYRGTGRRKNSVARVRLVPGEGNITVNNRDVREYLPFESLILDLNQPFDVTETKGNYDVLVNVHGGGFTGQAQAIRHGIARALLEADPEYRGSLKRAGLLTRDPRMKERKKPGLKAARRSPQFSKR</sequence>
<keyword id="KW-0002">3D-structure</keyword>
<keyword id="KW-1185">Reference proteome</keyword>
<keyword id="KW-0687">Ribonucleoprotein</keyword>
<keyword id="KW-0689">Ribosomal protein</keyword>